<sequence>MKSKSKTVPDVATLTKAKAKVELMRLALEIERHDKAYYQEDAPKVSDADYDALRRRLEEIEHKFPELVSGASPSQKVGAAPARGFAKVQHAVPMLSLGNAFSDDEVAEFLQRVRRFLNLGDEIPAIVAEPKIDGLSLSLRYEQGELVRAATRGDGSVGEDVTANVRTLKDIPHTLKGNRIPAACELRGEVYMLKSDFLALNKKQEEAGEAPFANPRNSAAGSLRQKDVAITASRPLKFFAYAWGEFSGETPERTQHDMLGWLDHAGFVVNPEITLCHSVDDALVFYRRIGEERAALPYDIDGVVYKVDRLDWQARLGFAGRAPRWAIAHKFAAEQATTILEKIEIQVGRTGALTPVARLAPVTVGGVVVQNATLHNEDYIKGVGNDGQPLREGRDIRVGDTVIIQRAGDVIPQVVDVVLDKRPADAVPYEFPQACPVCGSHAVREDGEVVRRCTGALICPAQAVERLKHFVSRLAFDIDGLGEKQIELFHERGWVKEPVDIFTLKTRNATLKLEELEGYGETSVRNLFAAIDARRTIELHRLIFALGIRHVGEGNAKLLARHYGTIDAFLGAMRAAAAGQTEEGNTSEAYQDLDNIGGIGDIVAEAVVEFFAEERNVEALDALLGELDEVLPAAQVKRDSAVAGKTVVFTGSLSKFTRDEAKAAAERLGAKVAGSVSKKTDFVVAGEDAGSKLTKARELGVSVLSEDEWLALIQG</sequence>
<comment type="function">
    <text evidence="1">DNA ligase that catalyzes the formation of phosphodiester linkages between 5'-phosphoryl and 3'-hydroxyl groups in double-stranded DNA using NAD as a coenzyme and as the energy source for the reaction. It is essential for DNA replication and repair of damaged DNA.</text>
</comment>
<comment type="catalytic activity">
    <reaction evidence="1">
        <text>NAD(+) + (deoxyribonucleotide)n-3'-hydroxyl + 5'-phospho-(deoxyribonucleotide)m = (deoxyribonucleotide)n+m + AMP + beta-nicotinamide D-nucleotide.</text>
        <dbReference type="EC" id="6.5.1.2"/>
    </reaction>
</comment>
<comment type="cofactor">
    <cofactor evidence="1">
        <name>Mg(2+)</name>
        <dbReference type="ChEBI" id="CHEBI:18420"/>
    </cofactor>
    <cofactor evidence="1">
        <name>Mn(2+)</name>
        <dbReference type="ChEBI" id="CHEBI:29035"/>
    </cofactor>
</comment>
<comment type="similarity">
    <text evidence="1">Belongs to the NAD-dependent DNA ligase family. LigA subfamily.</text>
</comment>
<comment type="sequence caution" evidence="2">
    <conflict type="erroneous initiation">
        <sequence resource="EMBL-CDS" id="ABJ06065"/>
    </conflict>
</comment>
<organism>
    <name type="scientific">Rhodopseudomonas palustris (strain BisA53)</name>
    <dbReference type="NCBI Taxonomy" id="316055"/>
    <lineage>
        <taxon>Bacteria</taxon>
        <taxon>Pseudomonadati</taxon>
        <taxon>Pseudomonadota</taxon>
        <taxon>Alphaproteobacteria</taxon>
        <taxon>Hyphomicrobiales</taxon>
        <taxon>Nitrobacteraceae</taxon>
        <taxon>Rhodopseudomonas</taxon>
    </lineage>
</organism>
<name>DNLJ_RHOP5</name>
<gene>
    <name evidence="1" type="primary">ligA</name>
    <name type="ordered locus">RPE_2121</name>
</gene>
<accession>Q07PR9</accession>
<feature type="chain" id="PRO_0000313401" description="DNA ligase">
    <location>
        <begin position="1"/>
        <end position="715"/>
    </location>
</feature>
<feature type="domain" description="BRCT" evidence="1">
    <location>
        <begin position="637"/>
        <end position="715"/>
    </location>
</feature>
<feature type="active site" description="N6-AMP-lysine intermediate" evidence="1">
    <location>
        <position position="131"/>
    </location>
</feature>
<feature type="binding site" evidence="1">
    <location>
        <begin position="47"/>
        <end position="51"/>
    </location>
    <ligand>
        <name>NAD(+)</name>
        <dbReference type="ChEBI" id="CHEBI:57540"/>
    </ligand>
</feature>
<feature type="binding site" evidence="1">
    <location>
        <begin position="96"/>
        <end position="97"/>
    </location>
    <ligand>
        <name>NAD(+)</name>
        <dbReference type="ChEBI" id="CHEBI:57540"/>
    </ligand>
</feature>
<feature type="binding site" evidence="1">
    <location>
        <position position="129"/>
    </location>
    <ligand>
        <name>NAD(+)</name>
        <dbReference type="ChEBI" id="CHEBI:57540"/>
    </ligand>
</feature>
<feature type="binding site" evidence="1">
    <location>
        <position position="152"/>
    </location>
    <ligand>
        <name>NAD(+)</name>
        <dbReference type="ChEBI" id="CHEBI:57540"/>
    </ligand>
</feature>
<feature type="binding site" evidence="1">
    <location>
        <position position="189"/>
    </location>
    <ligand>
        <name>NAD(+)</name>
        <dbReference type="ChEBI" id="CHEBI:57540"/>
    </ligand>
</feature>
<feature type="binding site" evidence="1">
    <location>
        <position position="306"/>
    </location>
    <ligand>
        <name>NAD(+)</name>
        <dbReference type="ChEBI" id="CHEBI:57540"/>
    </ligand>
</feature>
<feature type="binding site" evidence="1">
    <location>
        <position position="330"/>
    </location>
    <ligand>
        <name>NAD(+)</name>
        <dbReference type="ChEBI" id="CHEBI:57540"/>
    </ligand>
</feature>
<feature type="binding site" evidence="1">
    <location>
        <position position="435"/>
    </location>
    <ligand>
        <name>Zn(2+)</name>
        <dbReference type="ChEBI" id="CHEBI:29105"/>
    </ligand>
</feature>
<feature type="binding site" evidence="1">
    <location>
        <position position="438"/>
    </location>
    <ligand>
        <name>Zn(2+)</name>
        <dbReference type="ChEBI" id="CHEBI:29105"/>
    </ligand>
</feature>
<feature type="binding site" evidence="1">
    <location>
        <position position="453"/>
    </location>
    <ligand>
        <name>Zn(2+)</name>
        <dbReference type="ChEBI" id="CHEBI:29105"/>
    </ligand>
</feature>
<feature type="binding site" evidence="1">
    <location>
        <position position="459"/>
    </location>
    <ligand>
        <name>Zn(2+)</name>
        <dbReference type="ChEBI" id="CHEBI:29105"/>
    </ligand>
</feature>
<reference key="1">
    <citation type="submission" date="2006-09" db="EMBL/GenBank/DDBJ databases">
        <title>Complete sequence of Rhodopseudomonas palustris BisA53.</title>
        <authorList>
            <consortium name="US DOE Joint Genome Institute"/>
            <person name="Copeland A."/>
            <person name="Lucas S."/>
            <person name="Lapidus A."/>
            <person name="Barry K."/>
            <person name="Detter J.C."/>
            <person name="Glavina del Rio T."/>
            <person name="Hammon N."/>
            <person name="Israni S."/>
            <person name="Dalin E."/>
            <person name="Tice H."/>
            <person name="Pitluck S."/>
            <person name="Chain P."/>
            <person name="Malfatti S."/>
            <person name="Shin M."/>
            <person name="Vergez L."/>
            <person name="Schmutz J."/>
            <person name="Larimer F."/>
            <person name="Land M."/>
            <person name="Hauser L."/>
            <person name="Pelletier D.A."/>
            <person name="Kyrpides N."/>
            <person name="Kim E."/>
            <person name="Harwood C.S."/>
            <person name="Oda Y."/>
            <person name="Richardson P."/>
        </authorList>
    </citation>
    <scope>NUCLEOTIDE SEQUENCE [LARGE SCALE GENOMIC DNA]</scope>
    <source>
        <strain>BisA53</strain>
    </source>
</reference>
<proteinExistence type="inferred from homology"/>
<keyword id="KW-0227">DNA damage</keyword>
<keyword id="KW-0234">DNA repair</keyword>
<keyword id="KW-0235">DNA replication</keyword>
<keyword id="KW-0436">Ligase</keyword>
<keyword id="KW-0460">Magnesium</keyword>
<keyword id="KW-0464">Manganese</keyword>
<keyword id="KW-0479">Metal-binding</keyword>
<keyword id="KW-0520">NAD</keyword>
<keyword id="KW-0862">Zinc</keyword>
<protein>
    <recommendedName>
        <fullName evidence="1">DNA ligase</fullName>
        <ecNumber evidence="1">6.5.1.2</ecNumber>
    </recommendedName>
    <alternativeName>
        <fullName evidence="1">Polydeoxyribonucleotide synthase [NAD(+)]</fullName>
    </alternativeName>
</protein>
<evidence type="ECO:0000255" key="1">
    <source>
        <dbReference type="HAMAP-Rule" id="MF_01588"/>
    </source>
</evidence>
<evidence type="ECO:0000305" key="2"/>
<dbReference type="EC" id="6.5.1.2" evidence="1"/>
<dbReference type="EMBL" id="CP000463">
    <property type="protein sequence ID" value="ABJ06065.1"/>
    <property type="status" value="ALT_INIT"/>
    <property type="molecule type" value="Genomic_DNA"/>
</dbReference>
<dbReference type="SMR" id="Q07PR9"/>
<dbReference type="STRING" id="316055.RPE_2121"/>
<dbReference type="KEGG" id="rpe:RPE_2121"/>
<dbReference type="eggNOG" id="COG0272">
    <property type="taxonomic scope" value="Bacteria"/>
</dbReference>
<dbReference type="HOGENOM" id="CLU_007764_2_1_5"/>
<dbReference type="OrthoDB" id="9759736at2"/>
<dbReference type="GO" id="GO:0005829">
    <property type="term" value="C:cytosol"/>
    <property type="evidence" value="ECO:0007669"/>
    <property type="project" value="TreeGrafter"/>
</dbReference>
<dbReference type="GO" id="GO:0003911">
    <property type="term" value="F:DNA ligase (NAD+) activity"/>
    <property type="evidence" value="ECO:0007669"/>
    <property type="project" value="UniProtKB-UniRule"/>
</dbReference>
<dbReference type="GO" id="GO:0046872">
    <property type="term" value="F:metal ion binding"/>
    <property type="evidence" value="ECO:0007669"/>
    <property type="project" value="UniProtKB-KW"/>
</dbReference>
<dbReference type="GO" id="GO:0006281">
    <property type="term" value="P:DNA repair"/>
    <property type="evidence" value="ECO:0007669"/>
    <property type="project" value="UniProtKB-KW"/>
</dbReference>
<dbReference type="GO" id="GO:0006260">
    <property type="term" value="P:DNA replication"/>
    <property type="evidence" value="ECO:0007669"/>
    <property type="project" value="UniProtKB-KW"/>
</dbReference>
<dbReference type="CDD" id="cd17748">
    <property type="entry name" value="BRCT_DNA_ligase_like"/>
    <property type="match status" value="1"/>
</dbReference>
<dbReference type="CDD" id="cd00114">
    <property type="entry name" value="LIGANc"/>
    <property type="match status" value="1"/>
</dbReference>
<dbReference type="FunFam" id="1.10.150.20:FF:000007">
    <property type="entry name" value="DNA ligase"/>
    <property type="match status" value="1"/>
</dbReference>
<dbReference type="FunFam" id="3.30.470.30:FF:000001">
    <property type="entry name" value="DNA ligase"/>
    <property type="match status" value="1"/>
</dbReference>
<dbReference type="FunFam" id="3.40.50.10190:FF:000054">
    <property type="entry name" value="DNA ligase"/>
    <property type="match status" value="1"/>
</dbReference>
<dbReference type="Gene3D" id="6.20.10.30">
    <property type="match status" value="1"/>
</dbReference>
<dbReference type="Gene3D" id="1.10.150.20">
    <property type="entry name" value="5' to 3' exonuclease, C-terminal subdomain"/>
    <property type="match status" value="2"/>
</dbReference>
<dbReference type="Gene3D" id="3.40.50.10190">
    <property type="entry name" value="BRCT domain"/>
    <property type="match status" value="1"/>
</dbReference>
<dbReference type="Gene3D" id="3.30.470.30">
    <property type="entry name" value="DNA ligase/mRNA capping enzyme"/>
    <property type="match status" value="1"/>
</dbReference>
<dbReference type="Gene3D" id="1.10.287.610">
    <property type="entry name" value="Helix hairpin bin"/>
    <property type="match status" value="1"/>
</dbReference>
<dbReference type="Gene3D" id="2.40.50.140">
    <property type="entry name" value="Nucleic acid-binding proteins"/>
    <property type="match status" value="1"/>
</dbReference>
<dbReference type="HAMAP" id="MF_01588">
    <property type="entry name" value="DNA_ligase_A"/>
    <property type="match status" value="1"/>
</dbReference>
<dbReference type="InterPro" id="IPR001357">
    <property type="entry name" value="BRCT_dom"/>
</dbReference>
<dbReference type="InterPro" id="IPR036420">
    <property type="entry name" value="BRCT_dom_sf"/>
</dbReference>
<dbReference type="InterPro" id="IPR041663">
    <property type="entry name" value="DisA/LigA_HHH"/>
</dbReference>
<dbReference type="InterPro" id="IPR001679">
    <property type="entry name" value="DNA_ligase"/>
</dbReference>
<dbReference type="InterPro" id="IPR018239">
    <property type="entry name" value="DNA_ligase_AS"/>
</dbReference>
<dbReference type="InterPro" id="IPR033136">
    <property type="entry name" value="DNA_ligase_CS"/>
</dbReference>
<dbReference type="InterPro" id="IPR013839">
    <property type="entry name" value="DNAligase_adenylation"/>
</dbReference>
<dbReference type="InterPro" id="IPR013840">
    <property type="entry name" value="DNAligase_N"/>
</dbReference>
<dbReference type="InterPro" id="IPR012340">
    <property type="entry name" value="NA-bd_OB-fold"/>
</dbReference>
<dbReference type="InterPro" id="IPR004150">
    <property type="entry name" value="NAD_DNA_ligase_OB"/>
</dbReference>
<dbReference type="InterPro" id="IPR010994">
    <property type="entry name" value="RuvA_2-like"/>
</dbReference>
<dbReference type="InterPro" id="IPR004149">
    <property type="entry name" value="Znf_DNAligase_C4"/>
</dbReference>
<dbReference type="NCBIfam" id="TIGR00575">
    <property type="entry name" value="dnlj"/>
    <property type="match status" value="1"/>
</dbReference>
<dbReference type="NCBIfam" id="NF005932">
    <property type="entry name" value="PRK07956.1"/>
    <property type="match status" value="1"/>
</dbReference>
<dbReference type="PANTHER" id="PTHR23389">
    <property type="entry name" value="CHROMOSOME TRANSMISSION FIDELITY FACTOR 18"/>
    <property type="match status" value="1"/>
</dbReference>
<dbReference type="PANTHER" id="PTHR23389:SF9">
    <property type="entry name" value="DNA LIGASE"/>
    <property type="match status" value="1"/>
</dbReference>
<dbReference type="Pfam" id="PF00533">
    <property type="entry name" value="BRCT"/>
    <property type="match status" value="1"/>
</dbReference>
<dbReference type="Pfam" id="PF01653">
    <property type="entry name" value="DNA_ligase_aden"/>
    <property type="match status" value="1"/>
</dbReference>
<dbReference type="Pfam" id="PF03120">
    <property type="entry name" value="DNA_ligase_OB"/>
    <property type="match status" value="1"/>
</dbReference>
<dbReference type="Pfam" id="PF03119">
    <property type="entry name" value="DNA_ligase_ZBD"/>
    <property type="match status" value="1"/>
</dbReference>
<dbReference type="Pfam" id="PF12826">
    <property type="entry name" value="HHH_2"/>
    <property type="match status" value="1"/>
</dbReference>
<dbReference type="PIRSF" id="PIRSF001604">
    <property type="entry name" value="LigA"/>
    <property type="match status" value="1"/>
</dbReference>
<dbReference type="SMART" id="SM00292">
    <property type="entry name" value="BRCT"/>
    <property type="match status" value="1"/>
</dbReference>
<dbReference type="SMART" id="SM00532">
    <property type="entry name" value="LIGANc"/>
    <property type="match status" value="1"/>
</dbReference>
<dbReference type="SUPFAM" id="SSF52113">
    <property type="entry name" value="BRCT domain"/>
    <property type="match status" value="1"/>
</dbReference>
<dbReference type="SUPFAM" id="SSF56091">
    <property type="entry name" value="DNA ligase/mRNA capping enzyme, catalytic domain"/>
    <property type="match status" value="1"/>
</dbReference>
<dbReference type="SUPFAM" id="SSF50249">
    <property type="entry name" value="Nucleic acid-binding proteins"/>
    <property type="match status" value="1"/>
</dbReference>
<dbReference type="SUPFAM" id="SSF47781">
    <property type="entry name" value="RuvA domain 2-like"/>
    <property type="match status" value="1"/>
</dbReference>
<dbReference type="PROSITE" id="PS50172">
    <property type="entry name" value="BRCT"/>
    <property type="match status" value="1"/>
</dbReference>
<dbReference type="PROSITE" id="PS01055">
    <property type="entry name" value="DNA_LIGASE_N1"/>
    <property type="match status" value="1"/>
</dbReference>
<dbReference type="PROSITE" id="PS01056">
    <property type="entry name" value="DNA_LIGASE_N2"/>
    <property type="match status" value="1"/>
</dbReference>